<dbReference type="EMBL" id="AB001488">
    <property type="protein sequence ID" value="BAA19355.1"/>
    <property type="molecule type" value="Genomic_DNA"/>
</dbReference>
<dbReference type="EMBL" id="AL009126">
    <property type="protein sequence ID" value="CAB12327.1"/>
    <property type="molecule type" value="Genomic_DNA"/>
</dbReference>
<dbReference type="PIR" id="B69778">
    <property type="entry name" value="B69778"/>
</dbReference>
<dbReference type="RefSeq" id="NP_388401.1">
    <property type="nucleotide sequence ID" value="NC_000964.3"/>
</dbReference>
<dbReference type="RefSeq" id="WP_010886419.1">
    <property type="nucleotide sequence ID" value="NC_000964.3"/>
</dbReference>
<dbReference type="FunCoup" id="P96665">
    <property type="interactions" value="19"/>
</dbReference>
<dbReference type="STRING" id="224308.BSU05200"/>
<dbReference type="PaxDb" id="224308-BSU05200"/>
<dbReference type="EnsemblBacteria" id="CAB12327">
    <property type="protein sequence ID" value="CAB12327"/>
    <property type="gene ID" value="BSU_05200"/>
</dbReference>
<dbReference type="GeneID" id="938097"/>
<dbReference type="KEGG" id="bsu:BSU05200"/>
<dbReference type="eggNOG" id="ENOG5032WCQ">
    <property type="taxonomic scope" value="Bacteria"/>
</dbReference>
<dbReference type="InParanoid" id="P96665"/>
<dbReference type="OrthoDB" id="2357074at2"/>
<dbReference type="BioCyc" id="BSUB:BSU05200-MONOMER"/>
<dbReference type="Proteomes" id="UP000001570">
    <property type="component" value="Chromosome"/>
</dbReference>
<dbReference type="GO" id="GO:0005886">
    <property type="term" value="C:plasma membrane"/>
    <property type="evidence" value="ECO:0007669"/>
    <property type="project" value="UniProtKB-SubCell"/>
</dbReference>
<keyword id="KW-1003">Cell membrane</keyword>
<keyword id="KW-0472">Membrane</keyword>
<keyword id="KW-1185">Reference proteome</keyword>
<keyword id="KW-0812">Transmembrane</keyword>
<keyword id="KW-1133">Transmembrane helix</keyword>
<comment type="subcellular location">
    <subcellularLocation>
        <location evidence="2">Cell membrane</location>
        <topology evidence="2">Multi-pass membrane protein</topology>
    </subcellularLocation>
</comment>
<gene>
    <name type="primary">ydeH</name>
    <name type="ordered locus">BSU05200</name>
</gene>
<organism>
    <name type="scientific">Bacillus subtilis (strain 168)</name>
    <dbReference type="NCBI Taxonomy" id="224308"/>
    <lineage>
        <taxon>Bacteria</taxon>
        <taxon>Bacillati</taxon>
        <taxon>Bacillota</taxon>
        <taxon>Bacilli</taxon>
        <taxon>Bacillales</taxon>
        <taxon>Bacillaceae</taxon>
        <taxon>Bacillus</taxon>
    </lineage>
</organism>
<sequence>MNHIKWLSDLKKAGLLALGKGVITLLKRFSLVIVTLMMSIVVVLAAAKESPGDHVISFDEPIILMISIGIVVFLLIPPLVMSFFGNLVVRIISGVYQCFIVFTFLGLIPIGFLIPNGFLTILVSIAGTLVSIASVAVTLCIGKNKKDI</sequence>
<evidence type="ECO:0000255" key="1"/>
<evidence type="ECO:0000305" key="2"/>
<protein>
    <recommendedName>
        <fullName>Uncharacterized membrane protein YdeH</fullName>
    </recommendedName>
</protein>
<name>YDEH_BACSU</name>
<proteinExistence type="predicted"/>
<accession>P96665</accession>
<accession>Q797I3</accession>
<reference key="1">
    <citation type="submission" date="1997-03" db="EMBL/GenBank/DDBJ databases">
        <title>A 148 kbp sequence of the region between 35 and 47 degree of the Bacillus subtilis genome.</title>
        <authorList>
            <person name="Kasahara Y."/>
            <person name="Nakai S."/>
            <person name="Lee S."/>
            <person name="Sadaie Y."/>
            <person name="Ogasawara N."/>
        </authorList>
    </citation>
    <scope>NUCLEOTIDE SEQUENCE [GENOMIC DNA]</scope>
    <source>
        <strain>168</strain>
    </source>
</reference>
<reference key="2">
    <citation type="journal article" date="1997" name="Nature">
        <title>The complete genome sequence of the Gram-positive bacterium Bacillus subtilis.</title>
        <authorList>
            <person name="Kunst F."/>
            <person name="Ogasawara N."/>
            <person name="Moszer I."/>
            <person name="Albertini A.M."/>
            <person name="Alloni G."/>
            <person name="Azevedo V."/>
            <person name="Bertero M.G."/>
            <person name="Bessieres P."/>
            <person name="Bolotin A."/>
            <person name="Borchert S."/>
            <person name="Borriss R."/>
            <person name="Boursier L."/>
            <person name="Brans A."/>
            <person name="Braun M."/>
            <person name="Brignell S.C."/>
            <person name="Bron S."/>
            <person name="Brouillet S."/>
            <person name="Bruschi C.V."/>
            <person name="Caldwell B."/>
            <person name="Capuano V."/>
            <person name="Carter N.M."/>
            <person name="Choi S.-K."/>
            <person name="Codani J.-J."/>
            <person name="Connerton I.F."/>
            <person name="Cummings N.J."/>
            <person name="Daniel R.A."/>
            <person name="Denizot F."/>
            <person name="Devine K.M."/>
            <person name="Duesterhoeft A."/>
            <person name="Ehrlich S.D."/>
            <person name="Emmerson P.T."/>
            <person name="Entian K.-D."/>
            <person name="Errington J."/>
            <person name="Fabret C."/>
            <person name="Ferrari E."/>
            <person name="Foulger D."/>
            <person name="Fritz C."/>
            <person name="Fujita M."/>
            <person name="Fujita Y."/>
            <person name="Fuma S."/>
            <person name="Galizzi A."/>
            <person name="Galleron N."/>
            <person name="Ghim S.-Y."/>
            <person name="Glaser P."/>
            <person name="Goffeau A."/>
            <person name="Golightly E.J."/>
            <person name="Grandi G."/>
            <person name="Guiseppi G."/>
            <person name="Guy B.J."/>
            <person name="Haga K."/>
            <person name="Haiech J."/>
            <person name="Harwood C.R."/>
            <person name="Henaut A."/>
            <person name="Hilbert H."/>
            <person name="Holsappel S."/>
            <person name="Hosono S."/>
            <person name="Hullo M.-F."/>
            <person name="Itaya M."/>
            <person name="Jones L.-M."/>
            <person name="Joris B."/>
            <person name="Karamata D."/>
            <person name="Kasahara Y."/>
            <person name="Klaerr-Blanchard M."/>
            <person name="Klein C."/>
            <person name="Kobayashi Y."/>
            <person name="Koetter P."/>
            <person name="Koningstein G."/>
            <person name="Krogh S."/>
            <person name="Kumano M."/>
            <person name="Kurita K."/>
            <person name="Lapidus A."/>
            <person name="Lardinois S."/>
            <person name="Lauber J."/>
            <person name="Lazarevic V."/>
            <person name="Lee S.-M."/>
            <person name="Levine A."/>
            <person name="Liu H."/>
            <person name="Masuda S."/>
            <person name="Mauel C."/>
            <person name="Medigue C."/>
            <person name="Medina N."/>
            <person name="Mellado R.P."/>
            <person name="Mizuno M."/>
            <person name="Moestl D."/>
            <person name="Nakai S."/>
            <person name="Noback M."/>
            <person name="Noone D."/>
            <person name="O'Reilly M."/>
            <person name="Ogawa K."/>
            <person name="Ogiwara A."/>
            <person name="Oudega B."/>
            <person name="Park S.-H."/>
            <person name="Parro V."/>
            <person name="Pohl T.M."/>
            <person name="Portetelle D."/>
            <person name="Porwollik S."/>
            <person name="Prescott A.M."/>
            <person name="Presecan E."/>
            <person name="Pujic P."/>
            <person name="Purnelle B."/>
            <person name="Rapoport G."/>
            <person name="Rey M."/>
            <person name="Reynolds S."/>
            <person name="Rieger M."/>
            <person name="Rivolta C."/>
            <person name="Rocha E."/>
            <person name="Roche B."/>
            <person name="Rose M."/>
            <person name="Sadaie Y."/>
            <person name="Sato T."/>
            <person name="Scanlan E."/>
            <person name="Schleich S."/>
            <person name="Schroeter R."/>
            <person name="Scoffone F."/>
            <person name="Sekiguchi J."/>
            <person name="Sekowska A."/>
            <person name="Seror S.J."/>
            <person name="Serror P."/>
            <person name="Shin B.-S."/>
            <person name="Soldo B."/>
            <person name="Sorokin A."/>
            <person name="Tacconi E."/>
            <person name="Takagi T."/>
            <person name="Takahashi H."/>
            <person name="Takemaru K."/>
            <person name="Takeuchi M."/>
            <person name="Tamakoshi A."/>
            <person name="Tanaka T."/>
            <person name="Terpstra P."/>
            <person name="Tognoni A."/>
            <person name="Tosato V."/>
            <person name="Uchiyama S."/>
            <person name="Vandenbol M."/>
            <person name="Vannier F."/>
            <person name="Vassarotti A."/>
            <person name="Viari A."/>
            <person name="Wambutt R."/>
            <person name="Wedler E."/>
            <person name="Wedler H."/>
            <person name="Weitzenegger T."/>
            <person name="Winters P."/>
            <person name="Wipat A."/>
            <person name="Yamamoto H."/>
            <person name="Yamane K."/>
            <person name="Yasumoto K."/>
            <person name="Yata K."/>
            <person name="Yoshida K."/>
            <person name="Yoshikawa H.-F."/>
            <person name="Zumstein E."/>
            <person name="Yoshikawa H."/>
            <person name="Danchin A."/>
        </authorList>
    </citation>
    <scope>NUCLEOTIDE SEQUENCE [LARGE SCALE GENOMIC DNA]</scope>
    <source>
        <strain>168</strain>
    </source>
</reference>
<feature type="chain" id="PRO_0000375904" description="Uncharacterized membrane protein YdeH">
    <location>
        <begin position="1"/>
        <end position="148"/>
    </location>
</feature>
<feature type="transmembrane region" description="Helical" evidence="1">
    <location>
        <begin position="29"/>
        <end position="49"/>
    </location>
</feature>
<feature type="transmembrane region" description="Helical" evidence="1">
    <location>
        <begin position="61"/>
        <end position="81"/>
    </location>
</feature>
<feature type="transmembrane region" description="Helical" evidence="1">
    <location>
        <begin position="99"/>
        <end position="119"/>
    </location>
</feature>
<feature type="transmembrane region" description="Helical" evidence="1">
    <location>
        <begin position="121"/>
        <end position="141"/>
    </location>
</feature>